<gene>
    <name evidence="4" type="primary">TYDC1</name>
</gene>
<comment type="function">
    <text evidence="4">Catalyzes the decarboxylation of L-tyrosine to tyramine, which is converted to norbelladine, a precursor to all Amaryllidaceae alkaloids such as galanthamine, lycorine and haemanthamine, and including haemanthamine- and crinamine-type alkaloids, promising anticancer agents.</text>
</comment>
<comment type="catalytic activity">
    <reaction evidence="6">
        <text>L-tyrosine + H(+) = tyramine + CO2</text>
        <dbReference type="Rhea" id="RHEA:14345"/>
        <dbReference type="ChEBI" id="CHEBI:15378"/>
        <dbReference type="ChEBI" id="CHEBI:16526"/>
        <dbReference type="ChEBI" id="CHEBI:58315"/>
        <dbReference type="ChEBI" id="CHEBI:327995"/>
        <dbReference type="EC" id="4.1.1.25"/>
    </reaction>
</comment>
<comment type="cofactor">
    <cofactor evidence="1">
        <name>pyridoxal 5'-phosphate</name>
        <dbReference type="ChEBI" id="CHEBI:597326"/>
    </cofactor>
</comment>
<comment type="pathway">
    <text evidence="4">Alkaloid biosynthesis.</text>
</comment>
<comment type="tissue specificity">
    <text evidence="3">Mostly expressed in bulbs, and, to a lower extent, in stems, roots, leaves and flowers.</text>
</comment>
<comment type="similarity">
    <text evidence="5">Belongs to the group II decarboxylase family.</text>
</comment>
<keyword id="KW-0017">Alkaloid metabolism</keyword>
<keyword id="KW-0210">Decarboxylase</keyword>
<keyword id="KW-0456">Lyase</keyword>
<keyword id="KW-0663">Pyridoxal phosphate</keyword>
<keyword id="KW-0677">Repeat</keyword>
<feature type="chain" id="PRO_0000450638" description="Tyrosine decarboxylase 1">
    <location>
        <begin position="1"/>
        <end position="515"/>
    </location>
</feature>
<feature type="repeat" description="1" evidence="1">
    <location>
        <begin position="81"/>
        <end position="138"/>
    </location>
</feature>
<feature type="repeat" description="2" evidence="1">
    <location>
        <begin position="141"/>
        <end position="192"/>
    </location>
</feature>
<feature type="region of interest" description="2 X approximate tandem repeats" evidence="1">
    <location>
        <begin position="81"/>
        <end position="192"/>
    </location>
</feature>
<feature type="binding site" evidence="2">
    <location>
        <position position="105"/>
    </location>
    <ligand>
        <name>substrate</name>
    </ligand>
</feature>
<feature type="binding site" evidence="1">
    <location>
        <position position="169"/>
    </location>
    <ligand>
        <name>pyridoxal 5'-phosphate</name>
        <dbReference type="ChEBI" id="CHEBI:597326"/>
    </ligand>
</feature>
<feature type="binding site" evidence="1">
    <location>
        <position position="170"/>
    </location>
    <ligand>
        <name>pyridoxal 5'-phosphate</name>
        <dbReference type="ChEBI" id="CHEBI:597326"/>
    </ligand>
</feature>
<feature type="binding site" evidence="2">
    <location>
        <position position="205"/>
    </location>
    <ligand>
        <name>substrate</name>
    </ligand>
</feature>
<feature type="binding site" evidence="1">
    <location>
        <position position="264"/>
    </location>
    <ligand>
        <name>pyridoxal 5'-phosphate</name>
        <dbReference type="ChEBI" id="CHEBI:597326"/>
    </ligand>
</feature>
<feature type="binding site" evidence="1">
    <location>
        <position position="318"/>
    </location>
    <ligand>
        <name>pyridoxal 5'-phosphate</name>
        <dbReference type="ChEBI" id="CHEBI:597326"/>
    </ligand>
</feature>
<feature type="modified residue" description="N6-(pyridoxal phosphate)lysine" evidence="1">
    <location>
        <position position="321"/>
    </location>
</feature>
<dbReference type="EC" id="4.1.1.25" evidence="6"/>
<dbReference type="EMBL" id="MF405171">
    <property type="protein sequence ID" value="AUG71932.1"/>
    <property type="molecule type" value="mRNA"/>
</dbReference>
<dbReference type="SMR" id="A0A2H5AIY0"/>
<dbReference type="GO" id="GO:0005737">
    <property type="term" value="C:cytoplasm"/>
    <property type="evidence" value="ECO:0007669"/>
    <property type="project" value="TreeGrafter"/>
</dbReference>
<dbReference type="GO" id="GO:0030170">
    <property type="term" value="F:pyridoxal phosphate binding"/>
    <property type="evidence" value="ECO:0007669"/>
    <property type="project" value="InterPro"/>
</dbReference>
<dbReference type="GO" id="GO:0004837">
    <property type="term" value="F:tyrosine decarboxylase activity"/>
    <property type="evidence" value="ECO:0007669"/>
    <property type="project" value="UniProtKB-EC"/>
</dbReference>
<dbReference type="GO" id="GO:0009820">
    <property type="term" value="P:alkaloid metabolic process"/>
    <property type="evidence" value="ECO:0007669"/>
    <property type="project" value="UniProtKB-KW"/>
</dbReference>
<dbReference type="GO" id="GO:0006520">
    <property type="term" value="P:amino acid metabolic process"/>
    <property type="evidence" value="ECO:0007669"/>
    <property type="project" value="InterPro"/>
</dbReference>
<dbReference type="GO" id="GO:0019752">
    <property type="term" value="P:carboxylic acid metabolic process"/>
    <property type="evidence" value="ECO:0007669"/>
    <property type="project" value="InterPro"/>
</dbReference>
<dbReference type="CDD" id="cd06450">
    <property type="entry name" value="DOPA_deC_like"/>
    <property type="match status" value="1"/>
</dbReference>
<dbReference type="FunFam" id="1.20.1340.10:FF:000001">
    <property type="entry name" value="Histidine decarboxylase"/>
    <property type="match status" value="1"/>
</dbReference>
<dbReference type="FunFam" id="3.40.640.10:FF:000025">
    <property type="entry name" value="Histidine decarboxylase"/>
    <property type="match status" value="1"/>
</dbReference>
<dbReference type="Gene3D" id="3.90.1150.10">
    <property type="entry name" value="Aspartate Aminotransferase, domain 1"/>
    <property type="match status" value="1"/>
</dbReference>
<dbReference type="Gene3D" id="1.20.1340.10">
    <property type="entry name" value="dopa decarboxylase, N-terminal domain"/>
    <property type="match status" value="1"/>
</dbReference>
<dbReference type="Gene3D" id="3.40.640.10">
    <property type="entry name" value="Type I PLP-dependent aspartate aminotransferase-like (Major domain)"/>
    <property type="match status" value="1"/>
</dbReference>
<dbReference type="InterPro" id="IPR010977">
    <property type="entry name" value="Aromatic_deC"/>
</dbReference>
<dbReference type="InterPro" id="IPR002129">
    <property type="entry name" value="PyrdxlP-dep_de-COase"/>
</dbReference>
<dbReference type="InterPro" id="IPR015424">
    <property type="entry name" value="PyrdxlP-dep_Trfase"/>
</dbReference>
<dbReference type="InterPro" id="IPR015421">
    <property type="entry name" value="PyrdxlP-dep_Trfase_major"/>
</dbReference>
<dbReference type="InterPro" id="IPR015422">
    <property type="entry name" value="PyrdxlP-dep_Trfase_small"/>
</dbReference>
<dbReference type="InterPro" id="IPR021115">
    <property type="entry name" value="Pyridoxal-P_BS"/>
</dbReference>
<dbReference type="PANTHER" id="PTHR11999">
    <property type="entry name" value="GROUP II PYRIDOXAL-5-PHOSPHATE DECARBOXYLASE"/>
    <property type="match status" value="1"/>
</dbReference>
<dbReference type="PANTHER" id="PTHR11999:SF96">
    <property type="entry name" value="TYROSINE DECARBOXYLASE"/>
    <property type="match status" value="1"/>
</dbReference>
<dbReference type="Pfam" id="PF00282">
    <property type="entry name" value="Pyridoxal_deC"/>
    <property type="match status" value="1"/>
</dbReference>
<dbReference type="PRINTS" id="PR00800">
    <property type="entry name" value="YHDCRBOXLASE"/>
</dbReference>
<dbReference type="SUPFAM" id="SSF53383">
    <property type="entry name" value="PLP-dependent transferases"/>
    <property type="match status" value="1"/>
</dbReference>
<dbReference type="PROSITE" id="PS00392">
    <property type="entry name" value="DDC_GAD_HDC_YDC"/>
    <property type="match status" value="1"/>
</dbReference>
<name>TYDC1_NARPS</name>
<sequence>MGSLGSDNIAELEANGSAFNLNPLDPEEFRRQGHMVIDFLADYYQNVHKYPVRSQVEPGYLKKILPESAPNQPESLETILDDITNHIVPGITHWMSPNYFAYFPASGSTAGFLGEMLSTGFNAVCFNWMSSPAATELETIVTDWLGKLLALPEKFLFSGGGGGVLQGTTCEAILCTMTAARDKVLNKIGKDQIGKLVVYGSDQTHCALQKAAQIAGIHPANFRAVRTFKSDAFGLNPEELRKVVSADVEAGLVPLYLCPTVGTTSSTAVDQLRGLCSVAEEHEMWVHVDAAYAGSACICPEFRHFIDGVEGATSFSFNAHKWFFTNLDCCCLWVREPQALINALSTNPEYLRNKATESQKVVDYKDWQIALSRRFRAMKLWMVMRSYGVANLRNFLRSHVKMAKLFEGLVSADERFEIVVPRNFAMVCFRFNPTKKDRATGPELDRINEFNRRLLEEVNSTGRLYMTHAVIGGEYVMRFATGATLTEEKHVRCAWRAIQEHAAALMEKIYYKQRN</sequence>
<reference key="1">
    <citation type="journal article" date="2017" name="Sci. Rep.">
        <title>Transcriptome and metabolome profiling of Narcissus pseudonarcissus 'King Alfred' reveal components of Amaryllidaceae alkaloid metabolism.</title>
        <authorList>
            <person name="Singh A."/>
            <person name="Desgagne-Penix I."/>
        </authorList>
    </citation>
    <scope>NUCLEOTIDE SEQUENCE [MRNA]</scope>
    <scope>FUNCTION</scope>
    <scope>REVIEW ON THE AMARYLLIDACEAE ALKALOID METABOLISM</scope>
    <scope>PATHWAY</scope>
    <scope>TISSUE SPECIFICITY</scope>
    <scope>GENE FAMILY</scope>
    <scope>NOMENCLATURE</scope>
    <source>
        <strain>cv. King Alfred</strain>
        <tissue>Bulb</tissue>
    </source>
</reference>
<protein>
    <recommendedName>
        <fullName evidence="4">Tyrosine decarboxylase 1</fullName>
        <ecNumber evidence="6">4.1.1.25</ecNumber>
    </recommendedName>
</protein>
<evidence type="ECO:0000250" key="1">
    <source>
        <dbReference type="UniProtKB" id="P20711"/>
    </source>
</evidence>
<evidence type="ECO:0000250" key="2">
    <source>
        <dbReference type="UniProtKB" id="P80041"/>
    </source>
</evidence>
<evidence type="ECO:0000269" key="3">
    <source>
    </source>
</evidence>
<evidence type="ECO:0000303" key="4">
    <source>
    </source>
</evidence>
<evidence type="ECO:0000305" key="5"/>
<evidence type="ECO:0000305" key="6">
    <source>
    </source>
</evidence>
<organism>
    <name type="scientific">Narcissus pseudonarcissus</name>
    <name type="common">Daffodil</name>
    <dbReference type="NCBI Taxonomy" id="39639"/>
    <lineage>
        <taxon>Eukaryota</taxon>
        <taxon>Viridiplantae</taxon>
        <taxon>Streptophyta</taxon>
        <taxon>Embryophyta</taxon>
        <taxon>Tracheophyta</taxon>
        <taxon>Spermatophyta</taxon>
        <taxon>Magnoliopsida</taxon>
        <taxon>Liliopsida</taxon>
        <taxon>Asparagales</taxon>
        <taxon>Amaryllidaceae</taxon>
        <taxon>Amaryllidoideae</taxon>
        <taxon>Narcissus</taxon>
    </lineage>
</organism>
<accession>A0A2H5AIY0</accession>
<proteinExistence type="evidence at transcript level"/>